<comment type="function">
    <text evidence="1">Is involved in NO detoxification in an aerobic process, termed nitric oxide dioxygenase (NOD) reaction that utilizes O(2) and NAD(P)H to convert NO to nitrate, which protects the bacterium from various noxious nitrogen compounds. Therefore, plays a central role in the inducible response to nitrosative stress.</text>
</comment>
<comment type="catalytic activity">
    <reaction evidence="1">
        <text>2 nitric oxide + NADPH + 2 O2 = 2 nitrate + NADP(+) + H(+)</text>
        <dbReference type="Rhea" id="RHEA:19465"/>
        <dbReference type="ChEBI" id="CHEBI:15378"/>
        <dbReference type="ChEBI" id="CHEBI:15379"/>
        <dbReference type="ChEBI" id="CHEBI:16480"/>
        <dbReference type="ChEBI" id="CHEBI:17632"/>
        <dbReference type="ChEBI" id="CHEBI:57783"/>
        <dbReference type="ChEBI" id="CHEBI:58349"/>
        <dbReference type="EC" id="1.14.12.17"/>
    </reaction>
</comment>
<comment type="catalytic activity">
    <reaction evidence="1">
        <text>2 nitric oxide + NADH + 2 O2 = 2 nitrate + NAD(+) + H(+)</text>
        <dbReference type="Rhea" id="RHEA:19469"/>
        <dbReference type="ChEBI" id="CHEBI:15378"/>
        <dbReference type="ChEBI" id="CHEBI:15379"/>
        <dbReference type="ChEBI" id="CHEBI:16480"/>
        <dbReference type="ChEBI" id="CHEBI:17632"/>
        <dbReference type="ChEBI" id="CHEBI:57540"/>
        <dbReference type="ChEBI" id="CHEBI:57945"/>
        <dbReference type="EC" id="1.14.12.17"/>
    </reaction>
</comment>
<comment type="cofactor">
    <cofactor evidence="1">
        <name>heme b</name>
        <dbReference type="ChEBI" id="CHEBI:60344"/>
    </cofactor>
    <text evidence="1">Binds 1 heme b (iron(II)-protoporphyrin IX) group per subunit.</text>
</comment>
<comment type="cofactor">
    <cofactor evidence="1">
        <name>FAD</name>
        <dbReference type="ChEBI" id="CHEBI:57692"/>
    </cofactor>
    <text evidence="1">Binds 1 FAD per subunit.</text>
</comment>
<comment type="domain">
    <text>Consists of two distinct domains; an N-terminal heme-containing oxygen-binding domain and a C-terminal reductase domain with binding sites for FAD and NAD(P)H.</text>
</comment>
<comment type="similarity">
    <text evidence="1">Belongs to the globin family. Two-domain flavohemoproteins subfamily.</text>
</comment>
<comment type="similarity">
    <text evidence="1">In the C-terminal section; belongs to the flavoprotein pyridine nucleotide cytochrome reductase family.</text>
</comment>
<organism>
    <name type="scientific">Photobacterium profundum (strain SS9)</name>
    <dbReference type="NCBI Taxonomy" id="298386"/>
    <lineage>
        <taxon>Bacteria</taxon>
        <taxon>Pseudomonadati</taxon>
        <taxon>Pseudomonadota</taxon>
        <taxon>Gammaproteobacteria</taxon>
        <taxon>Vibrionales</taxon>
        <taxon>Vibrionaceae</taxon>
        <taxon>Photobacterium</taxon>
    </lineage>
</organism>
<dbReference type="EC" id="1.14.12.17" evidence="1"/>
<dbReference type="EMBL" id="CR378673">
    <property type="protein sequence ID" value="CAG21641.1"/>
    <property type="molecule type" value="Genomic_DNA"/>
</dbReference>
<dbReference type="RefSeq" id="WP_011219887.1">
    <property type="nucleotide sequence ID" value="NC_006370.1"/>
</dbReference>
<dbReference type="SMR" id="Q6LM37"/>
<dbReference type="STRING" id="298386.PBPRA3343"/>
<dbReference type="KEGG" id="ppr:PBPRA3343"/>
<dbReference type="eggNOG" id="COG1017">
    <property type="taxonomic scope" value="Bacteria"/>
</dbReference>
<dbReference type="eggNOG" id="COG1018">
    <property type="taxonomic scope" value="Bacteria"/>
</dbReference>
<dbReference type="HOGENOM" id="CLU_003827_12_0_6"/>
<dbReference type="Proteomes" id="UP000000593">
    <property type="component" value="Chromosome 1"/>
</dbReference>
<dbReference type="GO" id="GO:0071949">
    <property type="term" value="F:FAD binding"/>
    <property type="evidence" value="ECO:0007669"/>
    <property type="project" value="InterPro"/>
</dbReference>
<dbReference type="GO" id="GO:0020037">
    <property type="term" value="F:heme binding"/>
    <property type="evidence" value="ECO:0007669"/>
    <property type="project" value="InterPro"/>
</dbReference>
<dbReference type="GO" id="GO:0046872">
    <property type="term" value="F:metal ion binding"/>
    <property type="evidence" value="ECO:0007669"/>
    <property type="project" value="UniProtKB-KW"/>
</dbReference>
<dbReference type="GO" id="GO:0008941">
    <property type="term" value="F:nitric oxide dioxygenase NAD(P)H activity"/>
    <property type="evidence" value="ECO:0007669"/>
    <property type="project" value="UniProtKB-UniRule"/>
</dbReference>
<dbReference type="GO" id="GO:0019825">
    <property type="term" value="F:oxygen binding"/>
    <property type="evidence" value="ECO:0007669"/>
    <property type="project" value="InterPro"/>
</dbReference>
<dbReference type="GO" id="GO:0005344">
    <property type="term" value="F:oxygen carrier activity"/>
    <property type="evidence" value="ECO:0007669"/>
    <property type="project" value="UniProtKB-UniRule"/>
</dbReference>
<dbReference type="GO" id="GO:0071500">
    <property type="term" value="P:cellular response to nitrosative stress"/>
    <property type="evidence" value="ECO:0007669"/>
    <property type="project" value="TreeGrafter"/>
</dbReference>
<dbReference type="GO" id="GO:0046210">
    <property type="term" value="P:nitric oxide catabolic process"/>
    <property type="evidence" value="ECO:0007669"/>
    <property type="project" value="TreeGrafter"/>
</dbReference>
<dbReference type="GO" id="GO:0009636">
    <property type="term" value="P:response to toxic substance"/>
    <property type="evidence" value="ECO:0007669"/>
    <property type="project" value="UniProtKB-KW"/>
</dbReference>
<dbReference type="CDD" id="cd06184">
    <property type="entry name" value="flavohem_like_fad_nad_binding"/>
    <property type="match status" value="1"/>
</dbReference>
<dbReference type="CDD" id="cd14776">
    <property type="entry name" value="HmpEc-globin-like"/>
    <property type="match status" value="1"/>
</dbReference>
<dbReference type="FunFam" id="1.10.490.10:FF:000003">
    <property type="entry name" value="Flavohemoprotein"/>
    <property type="match status" value="1"/>
</dbReference>
<dbReference type="FunFam" id="2.40.30.10:FF:000034">
    <property type="entry name" value="Flavohemoprotein"/>
    <property type="match status" value="1"/>
</dbReference>
<dbReference type="FunFam" id="3.40.50.80:FF:000010">
    <property type="entry name" value="Flavohemoprotein"/>
    <property type="match status" value="1"/>
</dbReference>
<dbReference type="Gene3D" id="1.10.490.10">
    <property type="entry name" value="Globins"/>
    <property type="match status" value="1"/>
</dbReference>
<dbReference type="Gene3D" id="3.40.50.80">
    <property type="entry name" value="Nucleotide-binding domain of ferredoxin-NADP reductase (FNR) module"/>
    <property type="match status" value="1"/>
</dbReference>
<dbReference type="Gene3D" id="2.40.30.10">
    <property type="entry name" value="Translation factors"/>
    <property type="match status" value="1"/>
</dbReference>
<dbReference type="HAMAP" id="MF_01252">
    <property type="entry name" value="Hmp"/>
    <property type="match status" value="1"/>
</dbReference>
<dbReference type="InterPro" id="IPR008333">
    <property type="entry name" value="Cbr1-like_FAD-bd_dom"/>
</dbReference>
<dbReference type="InterPro" id="IPR017927">
    <property type="entry name" value="FAD-bd_FR_type"/>
</dbReference>
<dbReference type="InterPro" id="IPR001709">
    <property type="entry name" value="Flavoprot_Pyr_Nucl_cyt_Rdtase"/>
</dbReference>
<dbReference type="InterPro" id="IPR039261">
    <property type="entry name" value="FNR_nucleotide-bd"/>
</dbReference>
<dbReference type="InterPro" id="IPR000971">
    <property type="entry name" value="Globin"/>
</dbReference>
<dbReference type="InterPro" id="IPR009050">
    <property type="entry name" value="Globin-like_sf"/>
</dbReference>
<dbReference type="InterPro" id="IPR012292">
    <property type="entry name" value="Globin/Proto"/>
</dbReference>
<dbReference type="InterPro" id="IPR023950">
    <property type="entry name" value="Hmp"/>
</dbReference>
<dbReference type="InterPro" id="IPR001433">
    <property type="entry name" value="OxRdtase_FAD/NAD-bd"/>
</dbReference>
<dbReference type="InterPro" id="IPR017938">
    <property type="entry name" value="Riboflavin_synthase-like_b-brl"/>
</dbReference>
<dbReference type="NCBIfam" id="NF009805">
    <property type="entry name" value="PRK13289.1"/>
    <property type="match status" value="1"/>
</dbReference>
<dbReference type="PANTHER" id="PTHR43396">
    <property type="entry name" value="FLAVOHEMOPROTEIN"/>
    <property type="match status" value="1"/>
</dbReference>
<dbReference type="PANTHER" id="PTHR43396:SF3">
    <property type="entry name" value="FLAVOHEMOPROTEIN"/>
    <property type="match status" value="1"/>
</dbReference>
<dbReference type="Pfam" id="PF00970">
    <property type="entry name" value="FAD_binding_6"/>
    <property type="match status" value="1"/>
</dbReference>
<dbReference type="Pfam" id="PF00042">
    <property type="entry name" value="Globin"/>
    <property type="match status" value="1"/>
</dbReference>
<dbReference type="Pfam" id="PF00175">
    <property type="entry name" value="NAD_binding_1"/>
    <property type="match status" value="1"/>
</dbReference>
<dbReference type="PRINTS" id="PR00371">
    <property type="entry name" value="FPNCR"/>
</dbReference>
<dbReference type="PRINTS" id="PR00410">
    <property type="entry name" value="PHEHYDRXLASE"/>
</dbReference>
<dbReference type="SUPFAM" id="SSF52343">
    <property type="entry name" value="Ferredoxin reductase-like, C-terminal NADP-linked domain"/>
    <property type="match status" value="1"/>
</dbReference>
<dbReference type="SUPFAM" id="SSF46458">
    <property type="entry name" value="Globin-like"/>
    <property type="match status" value="1"/>
</dbReference>
<dbReference type="SUPFAM" id="SSF63380">
    <property type="entry name" value="Riboflavin synthase domain-like"/>
    <property type="match status" value="1"/>
</dbReference>
<dbReference type="PROSITE" id="PS51384">
    <property type="entry name" value="FAD_FR"/>
    <property type="match status" value="1"/>
</dbReference>
<dbReference type="PROSITE" id="PS01033">
    <property type="entry name" value="GLOBIN"/>
    <property type="match status" value="1"/>
</dbReference>
<keyword id="KW-0216">Detoxification</keyword>
<keyword id="KW-0274">FAD</keyword>
<keyword id="KW-0285">Flavoprotein</keyword>
<keyword id="KW-0349">Heme</keyword>
<keyword id="KW-0408">Iron</keyword>
<keyword id="KW-0479">Metal-binding</keyword>
<keyword id="KW-0520">NAD</keyword>
<keyword id="KW-0521">NADP</keyword>
<keyword id="KW-0560">Oxidoreductase</keyword>
<keyword id="KW-0561">Oxygen transport</keyword>
<keyword id="KW-1185">Reference proteome</keyword>
<keyword id="KW-0813">Transport</keyword>
<reference key="1">
    <citation type="journal article" date="2005" name="Science">
        <title>Life at depth: Photobacterium profundum genome sequence and expression analysis.</title>
        <authorList>
            <person name="Vezzi A."/>
            <person name="Campanaro S."/>
            <person name="D'Angelo M."/>
            <person name="Simonato F."/>
            <person name="Vitulo N."/>
            <person name="Lauro F.M."/>
            <person name="Cestaro A."/>
            <person name="Malacrida G."/>
            <person name="Simionati B."/>
            <person name="Cannata N."/>
            <person name="Romualdi C."/>
            <person name="Bartlett D.H."/>
            <person name="Valle G."/>
        </authorList>
    </citation>
    <scope>NUCLEOTIDE SEQUENCE [LARGE SCALE GENOMIC DNA]</scope>
    <source>
        <strain>ATCC BAA-1253 / SS9</strain>
    </source>
</reference>
<protein>
    <recommendedName>
        <fullName evidence="1">Flavohemoprotein</fullName>
    </recommendedName>
    <alternativeName>
        <fullName evidence="1">Flavohemoglobin</fullName>
    </alternativeName>
    <alternativeName>
        <fullName evidence="1">Hemoglobin-like protein</fullName>
    </alternativeName>
    <alternativeName>
        <fullName evidence="1">Nitric oxide dioxygenase</fullName>
        <shortName evidence="1">NO oxygenase</shortName>
        <shortName evidence="1">NOD</shortName>
        <ecNumber evidence="1">1.14.12.17</ecNumber>
    </alternativeName>
</protein>
<sequence>MISQQTIDIVKATAPVVAETGPKLTAHFYERMFNHNPELKDIFNMSNQRNGDQREALFNAICAYANNIDNLAALLPAVEKIAHKHTSFMITAEQYQIVGGHLLATIDELLSPGQEVLDAWGEAYGVLANVFITREEAIYQENEEKTGGWRGTREFTLIEKTQESDVITSFTFKPADGGTVSNFKPGQYLGIYLTPDAFEFQEIRQYSLSSAPRTDNYRISVKREEGGKVSNYLHNELTVGDTVQLAAPAGDFFLDVPATTPVTLISAGVGLTPTLSMLDALTEHQASVHWLHATENGSHHAFKDYVNTLADKYDHISATTWYREPLATDRPAEDFDYQGMIDLKAVASQLIDPAMHYYFCGPVGFMQHVAKQLIELDVQEDNIHYECFGPHKVL</sequence>
<name>HMP_PHOPR</name>
<proteinExistence type="inferred from homology"/>
<evidence type="ECO:0000255" key="1">
    <source>
        <dbReference type="HAMAP-Rule" id="MF_01252"/>
    </source>
</evidence>
<evidence type="ECO:0000255" key="2">
    <source>
        <dbReference type="PROSITE-ProRule" id="PRU00238"/>
    </source>
</evidence>
<accession>Q6LM37</accession>
<feature type="chain" id="PRO_0000052438" description="Flavohemoprotein">
    <location>
        <begin position="1"/>
        <end position="394"/>
    </location>
</feature>
<feature type="domain" description="Globin" evidence="2">
    <location>
        <begin position="1"/>
        <end position="136"/>
    </location>
</feature>
<feature type="domain" description="FAD-binding FR-type" evidence="1">
    <location>
        <begin position="150"/>
        <end position="255"/>
    </location>
</feature>
<feature type="region of interest" description="Reductase">
    <location>
        <begin position="147"/>
        <end position="394"/>
    </location>
</feature>
<feature type="active site" description="Charge relay system" evidence="1">
    <location>
        <position position="95"/>
    </location>
</feature>
<feature type="active site" description="Charge relay system" evidence="1">
    <location>
        <position position="135"/>
    </location>
</feature>
<feature type="binding site" description="proximal binding residue" evidence="1">
    <location>
        <position position="85"/>
    </location>
    <ligand>
        <name>heme b</name>
        <dbReference type="ChEBI" id="CHEBI:60344"/>
    </ligand>
    <ligandPart>
        <name>Fe</name>
        <dbReference type="ChEBI" id="CHEBI:18248"/>
    </ligandPart>
</feature>
<feature type="binding site" evidence="1">
    <location>
        <position position="188"/>
    </location>
    <ligand>
        <name>FAD</name>
        <dbReference type="ChEBI" id="CHEBI:57692"/>
    </ligand>
</feature>
<feature type="binding site" evidence="1">
    <location>
        <begin position="204"/>
        <end position="207"/>
    </location>
    <ligand>
        <name>FAD</name>
        <dbReference type="ChEBI" id="CHEBI:57692"/>
    </ligand>
</feature>
<feature type="binding site" evidence="1">
    <location>
        <begin position="268"/>
        <end position="273"/>
    </location>
    <ligand>
        <name>NADP(+)</name>
        <dbReference type="ChEBI" id="CHEBI:58349"/>
    </ligand>
</feature>
<feature type="binding site" evidence="1">
    <location>
        <begin position="387"/>
        <end position="390"/>
    </location>
    <ligand>
        <name>FAD</name>
        <dbReference type="ChEBI" id="CHEBI:57692"/>
    </ligand>
</feature>
<feature type="site" description="Involved in heme-bound ligand stabilization and O-O bond activation" evidence="1">
    <location>
        <position position="29"/>
    </location>
</feature>
<feature type="site" description="Influences the redox potential of the prosthetic heme and FAD groups" evidence="1">
    <location>
        <position position="84"/>
    </location>
</feature>
<feature type="site" description="Influences the redox potential of the prosthetic heme and FAD groups" evidence="1">
    <location>
        <position position="386"/>
    </location>
</feature>
<gene>
    <name evidence="1" type="primary">hmp</name>
    <name type="ordered locus">PBPRA3343</name>
</gene>